<proteinExistence type="inferred from homology"/>
<protein>
    <recommendedName>
        <fullName evidence="1">Tyrosine--tRNA ligase</fullName>
        <ecNumber evidence="1">6.1.1.1</ecNumber>
    </recommendedName>
    <alternativeName>
        <fullName evidence="1">Tyrosyl-tRNA synthetase</fullName>
        <shortName evidence="1">TyrRS</shortName>
    </alternativeName>
</protein>
<comment type="function">
    <text evidence="1">Catalyzes the attachment of tyrosine to tRNA(Tyr) in a two-step reaction: tyrosine is first activated by ATP to form Tyr-AMP and then transferred to the acceptor end of tRNA(Tyr).</text>
</comment>
<comment type="catalytic activity">
    <reaction evidence="1">
        <text>tRNA(Tyr) + L-tyrosine + ATP = L-tyrosyl-tRNA(Tyr) + AMP + diphosphate + H(+)</text>
        <dbReference type="Rhea" id="RHEA:10220"/>
        <dbReference type="Rhea" id="RHEA-COMP:9706"/>
        <dbReference type="Rhea" id="RHEA-COMP:9707"/>
        <dbReference type="ChEBI" id="CHEBI:15378"/>
        <dbReference type="ChEBI" id="CHEBI:30616"/>
        <dbReference type="ChEBI" id="CHEBI:33019"/>
        <dbReference type="ChEBI" id="CHEBI:58315"/>
        <dbReference type="ChEBI" id="CHEBI:78442"/>
        <dbReference type="ChEBI" id="CHEBI:78536"/>
        <dbReference type="ChEBI" id="CHEBI:456215"/>
        <dbReference type="EC" id="6.1.1.1"/>
    </reaction>
</comment>
<comment type="subunit">
    <text evidence="1">Homodimer.</text>
</comment>
<comment type="subcellular location">
    <subcellularLocation>
        <location evidence="1">Cytoplasm</location>
    </subcellularLocation>
</comment>
<comment type="similarity">
    <text evidence="1">Belongs to the class-I aminoacyl-tRNA synthetase family. TyrS type 2 subfamily.</text>
</comment>
<reference key="1">
    <citation type="journal article" date="1998" name="Nature">
        <title>The complete genome of the hyperthermophilic bacterium Aquifex aeolicus.</title>
        <authorList>
            <person name="Deckert G."/>
            <person name="Warren P.V."/>
            <person name="Gaasterland T."/>
            <person name="Young W.G."/>
            <person name="Lenox A.L."/>
            <person name="Graham D.E."/>
            <person name="Overbeek R."/>
            <person name="Snead M.A."/>
            <person name="Keller M."/>
            <person name="Aujay M."/>
            <person name="Huber R."/>
            <person name="Feldman R.A."/>
            <person name="Short J.M."/>
            <person name="Olsen G.J."/>
            <person name="Swanson R.V."/>
        </authorList>
    </citation>
    <scope>NUCLEOTIDE SEQUENCE [LARGE SCALE GENOMIC DNA]</scope>
    <source>
        <strain>VF5</strain>
    </source>
</reference>
<gene>
    <name evidence="1" type="primary">tyrS</name>
    <name type="ordered locus">aq_1751</name>
</gene>
<sequence>MTPEEQLRIIKEGTVEIIEEEELLKKLKEGRPLRVKAGFDPTAPDLHLGHVVLLQKLRQFQQLGHEVFFIIGDFTAMIGDPTGRSQTRPPLSREQVLENAKTYEHQVFKVLIPEKTTVVFNSTWLEELGTKGLIELCAKYTVARMLEREDFSKRFKEGIPIYIHEFIYPLLQAYDSVAIKADVEIGGTDQKFNLLIGRDIQREYGQEPQVCITLPLLVGTDGVRKMSKSYGNYVGITEDPKTMFAKIMSIPDEIMWDWFLLLTDYNKEEIEKMRREMHPMEAKKLLAFTIVKRFHSEEEARKAKEWWEKTFSQREFPEDAPLVKLNEKKLRAVDFLVKIGAVKSKNEARRVIQGGGLKINGEKVTDPNTEIEINGELKVKVGKKKFYRVVSG</sequence>
<accession>O67632</accession>
<name>SYY_AQUAE</name>
<organism>
    <name type="scientific">Aquifex aeolicus (strain VF5)</name>
    <dbReference type="NCBI Taxonomy" id="224324"/>
    <lineage>
        <taxon>Bacteria</taxon>
        <taxon>Pseudomonadati</taxon>
        <taxon>Aquificota</taxon>
        <taxon>Aquificia</taxon>
        <taxon>Aquificales</taxon>
        <taxon>Aquificaceae</taxon>
        <taxon>Aquifex</taxon>
    </lineage>
</organism>
<dbReference type="EC" id="6.1.1.1" evidence="1"/>
<dbReference type="EMBL" id="AE000657">
    <property type="protein sequence ID" value="AAC07595.1"/>
    <property type="molecule type" value="Genomic_DNA"/>
</dbReference>
<dbReference type="PIR" id="F70450">
    <property type="entry name" value="F70450"/>
</dbReference>
<dbReference type="RefSeq" id="NP_214198.1">
    <property type="nucleotide sequence ID" value="NC_000918.1"/>
</dbReference>
<dbReference type="RefSeq" id="WP_010881135.1">
    <property type="nucleotide sequence ID" value="NC_000918.1"/>
</dbReference>
<dbReference type="SMR" id="O67632"/>
<dbReference type="FunCoup" id="O67632">
    <property type="interactions" value="467"/>
</dbReference>
<dbReference type="STRING" id="224324.aq_1751"/>
<dbReference type="EnsemblBacteria" id="AAC07595">
    <property type="protein sequence ID" value="AAC07595"/>
    <property type="gene ID" value="aq_1751"/>
</dbReference>
<dbReference type="KEGG" id="aae:aq_1751"/>
<dbReference type="PATRIC" id="fig|224324.8.peg.1350"/>
<dbReference type="eggNOG" id="COG0162">
    <property type="taxonomic scope" value="Bacteria"/>
</dbReference>
<dbReference type="HOGENOM" id="CLU_024003_5_0_0"/>
<dbReference type="InParanoid" id="O67632"/>
<dbReference type="OrthoDB" id="9804243at2"/>
<dbReference type="Proteomes" id="UP000000798">
    <property type="component" value="Chromosome"/>
</dbReference>
<dbReference type="GO" id="GO:0005829">
    <property type="term" value="C:cytosol"/>
    <property type="evidence" value="ECO:0000318"/>
    <property type="project" value="GO_Central"/>
</dbReference>
<dbReference type="GO" id="GO:0005524">
    <property type="term" value="F:ATP binding"/>
    <property type="evidence" value="ECO:0007669"/>
    <property type="project" value="UniProtKB-UniRule"/>
</dbReference>
<dbReference type="GO" id="GO:0003723">
    <property type="term" value="F:RNA binding"/>
    <property type="evidence" value="ECO:0007669"/>
    <property type="project" value="UniProtKB-KW"/>
</dbReference>
<dbReference type="GO" id="GO:0004831">
    <property type="term" value="F:tyrosine-tRNA ligase activity"/>
    <property type="evidence" value="ECO:0000318"/>
    <property type="project" value="GO_Central"/>
</dbReference>
<dbReference type="GO" id="GO:0043039">
    <property type="term" value="P:tRNA aminoacylation"/>
    <property type="evidence" value="ECO:0000318"/>
    <property type="project" value="GO_Central"/>
</dbReference>
<dbReference type="GO" id="GO:0006437">
    <property type="term" value="P:tyrosyl-tRNA aminoacylation"/>
    <property type="evidence" value="ECO:0007669"/>
    <property type="project" value="UniProtKB-UniRule"/>
</dbReference>
<dbReference type="CDD" id="cd00165">
    <property type="entry name" value="S4"/>
    <property type="match status" value="1"/>
</dbReference>
<dbReference type="CDD" id="cd00805">
    <property type="entry name" value="TyrRS_core"/>
    <property type="match status" value="1"/>
</dbReference>
<dbReference type="FunFam" id="1.10.240.10:FF:000006">
    <property type="entry name" value="Tyrosine--tRNA ligase"/>
    <property type="match status" value="1"/>
</dbReference>
<dbReference type="FunFam" id="3.40.50.620:FF:000061">
    <property type="entry name" value="Tyrosine--tRNA ligase"/>
    <property type="match status" value="1"/>
</dbReference>
<dbReference type="Gene3D" id="3.40.50.620">
    <property type="entry name" value="HUPs"/>
    <property type="match status" value="1"/>
</dbReference>
<dbReference type="Gene3D" id="3.10.290.10">
    <property type="entry name" value="RNA-binding S4 domain"/>
    <property type="match status" value="1"/>
</dbReference>
<dbReference type="Gene3D" id="1.10.240.10">
    <property type="entry name" value="Tyrosyl-Transfer RNA Synthetase"/>
    <property type="match status" value="1"/>
</dbReference>
<dbReference type="HAMAP" id="MF_02007">
    <property type="entry name" value="Tyr_tRNA_synth_type2"/>
    <property type="match status" value="1"/>
</dbReference>
<dbReference type="InterPro" id="IPR001412">
    <property type="entry name" value="aa-tRNA-synth_I_CS"/>
</dbReference>
<dbReference type="InterPro" id="IPR002305">
    <property type="entry name" value="aa-tRNA-synth_Ic"/>
</dbReference>
<dbReference type="InterPro" id="IPR014729">
    <property type="entry name" value="Rossmann-like_a/b/a_fold"/>
</dbReference>
<dbReference type="InterPro" id="IPR002942">
    <property type="entry name" value="S4_RNA-bd"/>
</dbReference>
<dbReference type="InterPro" id="IPR036986">
    <property type="entry name" value="S4_RNA-bd_sf"/>
</dbReference>
<dbReference type="InterPro" id="IPR054608">
    <property type="entry name" value="SYY-like_C"/>
</dbReference>
<dbReference type="InterPro" id="IPR002307">
    <property type="entry name" value="Tyr-tRNA-ligase"/>
</dbReference>
<dbReference type="InterPro" id="IPR024088">
    <property type="entry name" value="Tyr-tRNA-ligase_bac-type"/>
</dbReference>
<dbReference type="InterPro" id="IPR024108">
    <property type="entry name" value="Tyr-tRNA-ligase_bac_2"/>
</dbReference>
<dbReference type="NCBIfam" id="TIGR00234">
    <property type="entry name" value="tyrS"/>
    <property type="match status" value="1"/>
</dbReference>
<dbReference type="PANTHER" id="PTHR11766:SF1">
    <property type="entry name" value="TYROSINE--TRNA LIGASE"/>
    <property type="match status" value="1"/>
</dbReference>
<dbReference type="PANTHER" id="PTHR11766">
    <property type="entry name" value="TYROSYL-TRNA SYNTHETASE"/>
    <property type="match status" value="1"/>
</dbReference>
<dbReference type="Pfam" id="PF22421">
    <property type="entry name" value="SYY_C-terminal"/>
    <property type="match status" value="1"/>
</dbReference>
<dbReference type="Pfam" id="PF00579">
    <property type="entry name" value="tRNA-synt_1b"/>
    <property type="match status" value="1"/>
</dbReference>
<dbReference type="PRINTS" id="PR01040">
    <property type="entry name" value="TRNASYNTHTYR"/>
</dbReference>
<dbReference type="SMART" id="SM00363">
    <property type="entry name" value="S4"/>
    <property type="match status" value="1"/>
</dbReference>
<dbReference type="SUPFAM" id="SSF55174">
    <property type="entry name" value="Alpha-L RNA-binding motif"/>
    <property type="match status" value="1"/>
</dbReference>
<dbReference type="SUPFAM" id="SSF52374">
    <property type="entry name" value="Nucleotidylyl transferase"/>
    <property type="match status" value="1"/>
</dbReference>
<dbReference type="PROSITE" id="PS00178">
    <property type="entry name" value="AA_TRNA_LIGASE_I"/>
    <property type="match status" value="1"/>
</dbReference>
<dbReference type="PROSITE" id="PS50889">
    <property type="entry name" value="S4"/>
    <property type="match status" value="1"/>
</dbReference>
<feature type="chain" id="PRO_0000055640" description="Tyrosine--tRNA ligase">
    <location>
        <begin position="1"/>
        <end position="392"/>
    </location>
</feature>
<feature type="domain" description="S4 RNA-binding" evidence="1">
    <location>
        <begin position="330"/>
        <end position="390"/>
    </location>
</feature>
<feature type="short sequence motif" description="'HIGH' region">
    <location>
        <begin position="41"/>
        <end position="50"/>
    </location>
</feature>
<feature type="short sequence motif" description="'KMSKS' region">
    <location>
        <begin position="225"/>
        <end position="229"/>
    </location>
</feature>
<feature type="binding site" evidence="1">
    <location>
        <position position="228"/>
    </location>
    <ligand>
        <name>ATP</name>
        <dbReference type="ChEBI" id="CHEBI:30616"/>
    </ligand>
</feature>
<keyword id="KW-0030">Aminoacyl-tRNA synthetase</keyword>
<keyword id="KW-0067">ATP-binding</keyword>
<keyword id="KW-0963">Cytoplasm</keyword>
<keyword id="KW-0436">Ligase</keyword>
<keyword id="KW-0547">Nucleotide-binding</keyword>
<keyword id="KW-0648">Protein biosynthesis</keyword>
<keyword id="KW-1185">Reference proteome</keyword>
<keyword id="KW-0694">RNA-binding</keyword>
<evidence type="ECO:0000255" key="1">
    <source>
        <dbReference type="HAMAP-Rule" id="MF_02007"/>
    </source>
</evidence>